<gene>
    <name evidence="1" type="primary">hisZ</name>
    <name type="ordered locus">ABSDF1436</name>
</gene>
<organism>
    <name type="scientific">Acinetobacter baumannii (strain SDF)</name>
    <dbReference type="NCBI Taxonomy" id="509170"/>
    <lineage>
        <taxon>Bacteria</taxon>
        <taxon>Pseudomonadati</taxon>
        <taxon>Pseudomonadota</taxon>
        <taxon>Gammaproteobacteria</taxon>
        <taxon>Moraxellales</taxon>
        <taxon>Moraxellaceae</taxon>
        <taxon>Acinetobacter</taxon>
        <taxon>Acinetobacter calcoaceticus/baumannii complex</taxon>
    </lineage>
</organism>
<name>HISZ_ACIBS</name>
<dbReference type="EMBL" id="CU468230">
    <property type="protein sequence ID" value="CAP00782.1"/>
    <property type="molecule type" value="Genomic_DNA"/>
</dbReference>
<dbReference type="SMR" id="B0VL32"/>
<dbReference type="KEGG" id="abm:ABSDF1436"/>
<dbReference type="HOGENOM" id="CLU_025113_0_1_6"/>
<dbReference type="UniPathway" id="UPA00031">
    <property type="reaction ID" value="UER00006"/>
</dbReference>
<dbReference type="Proteomes" id="UP000001741">
    <property type="component" value="Chromosome"/>
</dbReference>
<dbReference type="GO" id="GO:0005737">
    <property type="term" value="C:cytoplasm"/>
    <property type="evidence" value="ECO:0007669"/>
    <property type="project" value="UniProtKB-SubCell"/>
</dbReference>
<dbReference type="GO" id="GO:0000105">
    <property type="term" value="P:L-histidine biosynthetic process"/>
    <property type="evidence" value="ECO:0007669"/>
    <property type="project" value="UniProtKB-UniRule"/>
</dbReference>
<dbReference type="Gene3D" id="3.30.930.10">
    <property type="entry name" value="Bira Bifunctional Protein, Domain 2"/>
    <property type="match status" value="1"/>
</dbReference>
<dbReference type="HAMAP" id="MF_00125">
    <property type="entry name" value="HisZ"/>
    <property type="match status" value="1"/>
</dbReference>
<dbReference type="InterPro" id="IPR045864">
    <property type="entry name" value="aa-tRNA-synth_II/BPL/LPL"/>
</dbReference>
<dbReference type="InterPro" id="IPR041715">
    <property type="entry name" value="HisRS-like_core"/>
</dbReference>
<dbReference type="InterPro" id="IPR004516">
    <property type="entry name" value="HisRS/HisZ"/>
</dbReference>
<dbReference type="InterPro" id="IPR004517">
    <property type="entry name" value="HisZ"/>
</dbReference>
<dbReference type="NCBIfam" id="NF008935">
    <property type="entry name" value="PRK12292.1-1"/>
    <property type="match status" value="1"/>
</dbReference>
<dbReference type="NCBIfam" id="NF009086">
    <property type="entry name" value="PRK12421.1"/>
    <property type="match status" value="1"/>
</dbReference>
<dbReference type="PANTHER" id="PTHR11476:SF7">
    <property type="entry name" value="HISTIDINE--TRNA LIGASE"/>
    <property type="match status" value="1"/>
</dbReference>
<dbReference type="PANTHER" id="PTHR11476">
    <property type="entry name" value="HISTIDYL-TRNA SYNTHETASE"/>
    <property type="match status" value="1"/>
</dbReference>
<dbReference type="Pfam" id="PF13393">
    <property type="entry name" value="tRNA-synt_His"/>
    <property type="match status" value="1"/>
</dbReference>
<dbReference type="PIRSF" id="PIRSF001549">
    <property type="entry name" value="His-tRNA_synth"/>
    <property type="match status" value="1"/>
</dbReference>
<dbReference type="SUPFAM" id="SSF55681">
    <property type="entry name" value="Class II aaRS and biotin synthetases"/>
    <property type="match status" value="1"/>
</dbReference>
<accession>B0VL32</accession>
<protein>
    <recommendedName>
        <fullName evidence="1">ATP phosphoribosyltransferase regulatory subunit</fullName>
    </recommendedName>
</protein>
<reference key="1">
    <citation type="journal article" date="2008" name="PLoS ONE">
        <title>Comparative analysis of Acinetobacters: three genomes for three lifestyles.</title>
        <authorList>
            <person name="Vallenet D."/>
            <person name="Nordmann P."/>
            <person name="Barbe V."/>
            <person name="Poirel L."/>
            <person name="Mangenot S."/>
            <person name="Bataille E."/>
            <person name="Dossat C."/>
            <person name="Gas S."/>
            <person name="Kreimeyer A."/>
            <person name="Lenoble P."/>
            <person name="Oztas S."/>
            <person name="Poulain J."/>
            <person name="Segurens B."/>
            <person name="Robert C."/>
            <person name="Abergel C."/>
            <person name="Claverie J.-M."/>
            <person name="Raoult D."/>
            <person name="Medigue C."/>
            <person name="Weissenbach J."/>
            <person name="Cruveiller S."/>
        </authorList>
    </citation>
    <scope>NUCLEOTIDE SEQUENCE [LARGE SCALE GENOMIC DNA]</scope>
    <source>
        <strain>SDF</strain>
    </source>
</reference>
<feature type="chain" id="PRO_1000095441" description="ATP phosphoribosyltransferase regulatory subunit">
    <location>
        <begin position="1"/>
        <end position="388"/>
    </location>
</feature>
<comment type="function">
    <text evidence="1">Required for the first step of histidine biosynthesis. May allow the feedback regulation of ATP phosphoribosyltransferase activity by histidine.</text>
</comment>
<comment type="pathway">
    <text evidence="1">Amino-acid biosynthesis; L-histidine biosynthesis; L-histidine from 5-phospho-alpha-D-ribose 1-diphosphate: step 1/9.</text>
</comment>
<comment type="subunit">
    <text evidence="1">Heteromultimer composed of HisG and HisZ subunits.</text>
</comment>
<comment type="subcellular location">
    <subcellularLocation>
        <location evidence="1">Cytoplasm</location>
    </subcellularLocation>
</comment>
<comment type="miscellaneous">
    <text>This function is generally fulfilled by the C-terminal part of HisG, which is missing in some bacteria such as this one.</text>
</comment>
<comment type="similarity">
    <text evidence="1">Belongs to the class-II aminoacyl-tRNA synthetase family. HisZ subfamily.</text>
</comment>
<keyword id="KW-0028">Amino-acid biosynthesis</keyword>
<keyword id="KW-0963">Cytoplasm</keyword>
<keyword id="KW-0368">Histidine biosynthesis</keyword>
<sequence>MTISETWLLPDGVADVLPEQAQVIEKLRREAIDFLAVRGYQLVYTPFIEYIESLSSLSESNQDLDLVTFKVIDQLSGRLLGIRADMTPQVARIDAHVRPVEGVARYCYAGTVLHTKPQNFNATRAPLQLGAELYGHDSIEADVEMVYVMLGLIENAYTLQGAHLDLGHVGLFRSLVKYAGLSKNEEHELSDLYQRKALPELAEFTQNLNMGSDFYALGRYASDLDALQVHLSADILKDTEFDAALNALKITLEQIKNRWPALNVGIDVVELRSYHYHTGLMYAVYAPNRAAPLAQGGRYDGIGEHFGRARPATGFSCDLYALGANQFAEIETVVAPKGTEADLLKAIANARSEGLRVVQLLGNDDLSSIPYATHQLVLQNGQWNIEKI</sequence>
<evidence type="ECO:0000255" key="1">
    <source>
        <dbReference type="HAMAP-Rule" id="MF_00125"/>
    </source>
</evidence>
<proteinExistence type="inferred from homology"/>